<dbReference type="EC" id="1.1.1.267" evidence="1"/>
<dbReference type="EMBL" id="CP001043">
    <property type="protein sequence ID" value="ACC70514.1"/>
    <property type="molecule type" value="Genomic_DNA"/>
</dbReference>
<dbReference type="RefSeq" id="WP_012400728.1">
    <property type="nucleotide sequence ID" value="NC_010622.1"/>
</dbReference>
<dbReference type="SMR" id="B2JIC0"/>
<dbReference type="STRING" id="391038.Bphy_1332"/>
<dbReference type="KEGG" id="bph:Bphy_1332"/>
<dbReference type="eggNOG" id="COG0743">
    <property type="taxonomic scope" value="Bacteria"/>
</dbReference>
<dbReference type="HOGENOM" id="CLU_035714_4_0_4"/>
<dbReference type="OrthoDB" id="9806546at2"/>
<dbReference type="UniPathway" id="UPA00056">
    <property type="reaction ID" value="UER00092"/>
</dbReference>
<dbReference type="Proteomes" id="UP000001192">
    <property type="component" value="Chromosome 1"/>
</dbReference>
<dbReference type="GO" id="GO:0030604">
    <property type="term" value="F:1-deoxy-D-xylulose-5-phosphate reductoisomerase activity"/>
    <property type="evidence" value="ECO:0007669"/>
    <property type="project" value="UniProtKB-UniRule"/>
</dbReference>
<dbReference type="GO" id="GO:0030145">
    <property type="term" value="F:manganese ion binding"/>
    <property type="evidence" value="ECO:0007669"/>
    <property type="project" value="TreeGrafter"/>
</dbReference>
<dbReference type="GO" id="GO:0070402">
    <property type="term" value="F:NADPH binding"/>
    <property type="evidence" value="ECO:0007669"/>
    <property type="project" value="InterPro"/>
</dbReference>
<dbReference type="GO" id="GO:0051484">
    <property type="term" value="P:isopentenyl diphosphate biosynthetic process, methylerythritol 4-phosphate pathway involved in terpenoid biosynthetic process"/>
    <property type="evidence" value="ECO:0007669"/>
    <property type="project" value="TreeGrafter"/>
</dbReference>
<dbReference type="FunFam" id="3.40.50.720:FF:000045">
    <property type="entry name" value="1-deoxy-D-xylulose 5-phosphate reductoisomerase"/>
    <property type="match status" value="1"/>
</dbReference>
<dbReference type="Gene3D" id="1.10.1740.10">
    <property type="match status" value="1"/>
</dbReference>
<dbReference type="Gene3D" id="3.40.50.720">
    <property type="entry name" value="NAD(P)-binding Rossmann-like Domain"/>
    <property type="match status" value="1"/>
</dbReference>
<dbReference type="HAMAP" id="MF_00183">
    <property type="entry name" value="DXP_reductoisom"/>
    <property type="match status" value="1"/>
</dbReference>
<dbReference type="InterPro" id="IPR003821">
    <property type="entry name" value="DXP_reductoisomerase"/>
</dbReference>
<dbReference type="InterPro" id="IPR013644">
    <property type="entry name" value="DXP_reductoisomerase_C"/>
</dbReference>
<dbReference type="InterPro" id="IPR013512">
    <property type="entry name" value="DXP_reductoisomerase_N"/>
</dbReference>
<dbReference type="InterPro" id="IPR026877">
    <property type="entry name" value="DXPR_C"/>
</dbReference>
<dbReference type="InterPro" id="IPR036169">
    <property type="entry name" value="DXPR_C_sf"/>
</dbReference>
<dbReference type="InterPro" id="IPR036291">
    <property type="entry name" value="NAD(P)-bd_dom_sf"/>
</dbReference>
<dbReference type="NCBIfam" id="TIGR00243">
    <property type="entry name" value="Dxr"/>
    <property type="match status" value="1"/>
</dbReference>
<dbReference type="NCBIfam" id="NF003938">
    <property type="entry name" value="PRK05447.1-1"/>
    <property type="match status" value="1"/>
</dbReference>
<dbReference type="NCBIfam" id="NF009114">
    <property type="entry name" value="PRK12464.1"/>
    <property type="match status" value="1"/>
</dbReference>
<dbReference type="PANTHER" id="PTHR30525">
    <property type="entry name" value="1-DEOXY-D-XYLULOSE 5-PHOSPHATE REDUCTOISOMERASE"/>
    <property type="match status" value="1"/>
</dbReference>
<dbReference type="PANTHER" id="PTHR30525:SF0">
    <property type="entry name" value="1-DEOXY-D-XYLULOSE 5-PHOSPHATE REDUCTOISOMERASE, CHLOROPLASTIC"/>
    <property type="match status" value="1"/>
</dbReference>
<dbReference type="Pfam" id="PF08436">
    <property type="entry name" value="DXP_redisom_C"/>
    <property type="match status" value="1"/>
</dbReference>
<dbReference type="Pfam" id="PF02670">
    <property type="entry name" value="DXP_reductoisom"/>
    <property type="match status" value="1"/>
</dbReference>
<dbReference type="Pfam" id="PF13288">
    <property type="entry name" value="DXPR_C"/>
    <property type="match status" value="1"/>
</dbReference>
<dbReference type="PIRSF" id="PIRSF006205">
    <property type="entry name" value="Dxp_reductismrs"/>
    <property type="match status" value="1"/>
</dbReference>
<dbReference type="SUPFAM" id="SSF69055">
    <property type="entry name" value="1-deoxy-D-xylulose-5-phosphate reductoisomerase, C-terminal domain"/>
    <property type="match status" value="1"/>
</dbReference>
<dbReference type="SUPFAM" id="SSF55347">
    <property type="entry name" value="Glyceraldehyde-3-phosphate dehydrogenase-like, C-terminal domain"/>
    <property type="match status" value="1"/>
</dbReference>
<dbReference type="SUPFAM" id="SSF51735">
    <property type="entry name" value="NAD(P)-binding Rossmann-fold domains"/>
    <property type="match status" value="1"/>
</dbReference>
<name>DXR_PARP8</name>
<feature type="chain" id="PRO_1000098479" description="1-deoxy-D-xylulose 5-phosphate reductoisomerase">
    <location>
        <begin position="1"/>
        <end position="401"/>
    </location>
</feature>
<feature type="binding site" evidence="1">
    <location>
        <position position="11"/>
    </location>
    <ligand>
        <name>NADPH</name>
        <dbReference type="ChEBI" id="CHEBI:57783"/>
    </ligand>
</feature>
<feature type="binding site" evidence="1">
    <location>
        <position position="12"/>
    </location>
    <ligand>
        <name>NADPH</name>
        <dbReference type="ChEBI" id="CHEBI:57783"/>
    </ligand>
</feature>
<feature type="binding site" evidence="1">
    <location>
        <position position="13"/>
    </location>
    <ligand>
        <name>NADPH</name>
        <dbReference type="ChEBI" id="CHEBI:57783"/>
    </ligand>
</feature>
<feature type="binding site" evidence="1">
    <location>
        <position position="14"/>
    </location>
    <ligand>
        <name>NADPH</name>
        <dbReference type="ChEBI" id="CHEBI:57783"/>
    </ligand>
</feature>
<feature type="binding site" evidence="1">
    <location>
        <position position="38"/>
    </location>
    <ligand>
        <name>NADPH</name>
        <dbReference type="ChEBI" id="CHEBI:57783"/>
    </ligand>
</feature>
<feature type="binding site" evidence="1">
    <location>
        <position position="39"/>
    </location>
    <ligand>
        <name>NADPH</name>
        <dbReference type="ChEBI" id="CHEBI:57783"/>
    </ligand>
</feature>
<feature type="binding site" evidence="1">
    <location>
        <position position="125"/>
    </location>
    <ligand>
        <name>NADPH</name>
        <dbReference type="ChEBI" id="CHEBI:57783"/>
    </ligand>
</feature>
<feature type="binding site" evidence="1">
    <location>
        <position position="126"/>
    </location>
    <ligand>
        <name>1-deoxy-D-xylulose 5-phosphate</name>
        <dbReference type="ChEBI" id="CHEBI:57792"/>
    </ligand>
</feature>
<feature type="binding site" evidence="1">
    <location>
        <position position="127"/>
    </location>
    <ligand>
        <name>NADPH</name>
        <dbReference type="ChEBI" id="CHEBI:57783"/>
    </ligand>
</feature>
<feature type="binding site" evidence="1">
    <location>
        <position position="151"/>
    </location>
    <ligand>
        <name>Mn(2+)</name>
        <dbReference type="ChEBI" id="CHEBI:29035"/>
    </ligand>
</feature>
<feature type="binding site" evidence="1">
    <location>
        <position position="152"/>
    </location>
    <ligand>
        <name>1-deoxy-D-xylulose 5-phosphate</name>
        <dbReference type="ChEBI" id="CHEBI:57792"/>
    </ligand>
</feature>
<feature type="binding site" evidence="1">
    <location>
        <position position="153"/>
    </location>
    <ligand>
        <name>1-deoxy-D-xylulose 5-phosphate</name>
        <dbReference type="ChEBI" id="CHEBI:57792"/>
    </ligand>
</feature>
<feature type="binding site" evidence="1">
    <location>
        <position position="153"/>
    </location>
    <ligand>
        <name>Mn(2+)</name>
        <dbReference type="ChEBI" id="CHEBI:29035"/>
    </ligand>
</feature>
<feature type="binding site" evidence="1">
    <location>
        <position position="179"/>
    </location>
    <ligand>
        <name>1-deoxy-D-xylulose 5-phosphate</name>
        <dbReference type="ChEBI" id="CHEBI:57792"/>
    </ligand>
</feature>
<feature type="binding site" evidence="1">
    <location>
        <position position="202"/>
    </location>
    <ligand>
        <name>1-deoxy-D-xylulose 5-phosphate</name>
        <dbReference type="ChEBI" id="CHEBI:57792"/>
    </ligand>
</feature>
<feature type="binding site" evidence="1">
    <location>
        <position position="208"/>
    </location>
    <ligand>
        <name>NADPH</name>
        <dbReference type="ChEBI" id="CHEBI:57783"/>
    </ligand>
</feature>
<feature type="binding site" evidence="1">
    <location>
        <position position="215"/>
    </location>
    <ligand>
        <name>1-deoxy-D-xylulose 5-phosphate</name>
        <dbReference type="ChEBI" id="CHEBI:57792"/>
    </ligand>
</feature>
<feature type="binding site" evidence="1">
    <location>
        <position position="220"/>
    </location>
    <ligand>
        <name>1-deoxy-D-xylulose 5-phosphate</name>
        <dbReference type="ChEBI" id="CHEBI:57792"/>
    </ligand>
</feature>
<feature type="binding site" evidence="1">
    <location>
        <position position="221"/>
    </location>
    <ligand>
        <name>1-deoxy-D-xylulose 5-phosphate</name>
        <dbReference type="ChEBI" id="CHEBI:57792"/>
    </ligand>
</feature>
<feature type="binding site" evidence="1">
    <location>
        <position position="224"/>
    </location>
    <ligand>
        <name>1-deoxy-D-xylulose 5-phosphate</name>
        <dbReference type="ChEBI" id="CHEBI:57792"/>
    </ligand>
</feature>
<feature type="binding site" evidence="1">
    <location>
        <position position="224"/>
    </location>
    <ligand>
        <name>Mn(2+)</name>
        <dbReference type="ChEBI" id="CHEBI:29035"/>
    </ligand>
</feature>
<gene>
    <name evidence="1" type="primary">dxr</name>
    <name type="ordered locus">Bphy_1332</name>
</gene>
<evidence type="ECO:0000255" key="1">
    <source>
        <dbReference type="HAMAP-Rule" id="MF_00183"/>
    </source>
</evidence>
<comment type="function">
    <text evidence="1">Catalyzes the NADPH-dependent rearrangement and reduction of 1-deoxy-D-xylulose-5-phosphate (DXP) to 2-C-methyl-D-erythritol 4-phosphate (MEP).</text>
</comment>
<comment type="catalytic activity">
    <reaction evidence="1">
        <text>2-C-methyl-D-erythritol 4-phosphate + NADP(+) = 1-deoxy-D-xylulose 5-phosphate + NADPH + H(+)</text>
        <dbReference type="Rhea" id="RHEA:13717"/>
        <dbReference type="ChEBI" id="CHEBI:15378"/>
        <dbReference type="ChEBI" id="CHEBI:57783"/>
        <dbReference type="ChEBI" id="CHEBI:57792"/>
        <dbReference type="ChEBI" id="CHEBI:58262"/>
        <dbReference type="ChEBI" id="CHEBI:58349"/>
        <dbReference type="EC" id="1.1.1.267"/>
    </reaction>
    <physiologicalReaction direction="right-to-left" evidence="1">
        <dbReference type="Rhea" id="RHEA:13719"/>
    </physiologicalReaction>
</comment>
<comment type="cofactor">
    <cofactor evidence="1">
        <name>Mg(2+)</name>
        <dbReference type="ChEBI" id="CHEBI:18420"/>
    </cofactor>
    <cofactor evidence="1">
        <name>Mn(2+)</name>
        <dbReference type="ChEBI" id="CHEBI:29035"/>
    </cofactor>
</comment>
<comment type="pathway">
    <text evidence="1">Isoprenoid biosynthesis; isopentenyl diphosphate biosynthesis via DXP pathway; isopentenyl diphosphate from 1-deoxy-D-xylulose 5-phosphate: step 1/6.</text>
</comment>
<comment type="similarity">
    <text evidence="1">Belongs to the DXR family.</text>
</comment>
<protein>
    <recommendedName>
        <fullName evidence="1">1-deoxy-D-xylulose 5-phosphate reductoisomerase</fullName>
        <shortName evidence="1">DXP reductoisomerase</shortName>
        <ecNumber evidence="1">1.1.1.267</ecNumber>
    </recommendedName>
    <alternativeName>
        <fullName evidence="1">1-deoxyxylulose-5-phosphate reductoisomerase</fullName>
    </alternativeName>
    <alternativeName>
        <fullName evidence="1">2-C-methyl-D-erythritol 4-phosphate synthase</fullName>
    </alternativeName>
</protein>
<keyword id="KW-0414">Isoprene biosynthesis</keyword>
<keyword id="KW-0464">Manganese</keyword>
<keyword id="KW-0479">Metal-binding</keyword>
<keyword id="KW-0521">NADP</keyword>
<keyword id="KW-0560">Oxidoreductase</keyword>
<keyword id="KW-1185">Reference proteome</keyword>
<proteinExistence type="inferred from homology"/>
<accession>B2JIC0</accession>
<sequence length="401" mass="42218">MQKRLTLLGSTGSIGDSTLDVVARHPDRFFVYALTAHRNGDKLVEQCLRFQPEVAVVGDADTAAKVAAKLRAAGCKTAVAYGPQALVDVSKSDGCDTVVAAIVGAAGLEPSLAAARAGKRILLANKEALVMSGSIFMDAVHDNGAILLPVDSEHNAIFQCLPRESALHGGVSKIILTASGGPFRTREPASLVDVTPDEACKHPNWVMGRKISVDSATMMNKGLEVIEAHWLFNLPGDRIDVLIHPQSVIHSLVSYADGSVLAQLGNPDMRTPIAHALAFPDRVDSGVGQLDLAQIAQLSFEKPDYTRFPCLALAMKALAEGGVASAALNAANEIAVEAFLTRRIGFMAIAQVVDAVLNSLPNREATSLADVVDADAAARRAAHAYIDGLPAGARLTERAVQ</sequence>
<organism>
    <name type="scientific">Paraburkholderia phymatum (strain DSM 17167 / CIP 108236 / LMG 21445 / STM815)</name>
    <name type="common">Burkholderia phymatum</name>
    <dbReference type="NCBI Taxonomy" id="391038"/>
    <lineage>
        <taxon>Bacteria</taxon>
        <taxon>Pseudomonadati</taxon>
        <taxon>Pseudomonadota</taxon>
        <taxon>Betaproteobacteria</taxon>
        <taxon>Burkholderiales</taxon>
        <taxon>Burkholderiaceae</taxon>
        <taxon>Paraburkholderia</taxon>
    </lineage>
</organism>
<reference key="1">
    <citation type="journal article" date="2014" name="Stand. Genomic Sci.">
        <title>Complete genome sequence of Burkholderia phymatum STM815(T), a broad host range and efficient nitrogen-fixing symbiont of Mimosa species.</title>
        <authorList>
            <person name="Moulin L."/>
            <person name="Klonowska A."/>
            <person name="Caroline B."/>
            <person name="Booth K."/>
            <person name="Vriezen J.A."/>
            <person name="Melkonian R."/>
            <person name="James E.K."/>
            <person name="Young J.P."/>
            <person name="Bena G."/>
            <person name="Hauser L."/>
            <person name="Land M."/>
            <person name="Kyrpides N."/>
            <person name="Bruce D."/>
            <person name="Chain P."/>
            <person name="Copeland A."/>
            <person name="Pitluck S."/>
            <person name="Woyke T."/>
            <person name="Lizotte-Waniewski M."/>
            <person name="Bristow J."/>
            <person name="Riley M."/>
        </authorList>
    </citation>
    <scope>NUCLEOTIDE SEQUENCE [LARGE SCALE GENOMIC DNA]</scope>
    <source>
        <strain>DSM 17167 / CIP 108236 / LMG 21445 / STM815</strain>
    </source>
</reference>